<feature type="chain" id="PRO_0000211088" description="Segregation and condensation protein A">
    <location>
        <begin position="1"/>
        <end position="261"/>
    </location>
</feature>
<keyword id="KW-0131">Cell cycle</keyword>
<keyword id="KW-0132">Cell division</keyword>
<keyword id="KW-0159">Chromosome partition</keyword>
<keyword id="KW-0963">Cytoplasm</keyword>
<evidence type="ECO:0000255" key="1">
    <source>
        <dbReference type="HAMAP-Rule" id="MF_01805"/>
    </source>
</evidence>
<sequence>MENEESGKSFVVQWNNSEGGLSEGPLSVLWSLIESYKVDIFDVSLSRITRDFLSFLRISETLSLELSAEYALMAANLIYLKSKALLPDPGFEEEDYEPPLPPELVEKLLEHKKFQLTAKKLSEMDQTQTGVFRRESNVTLDEEDNWLDVSLLDLISAFHEILESQSVEAEIPTLLTAPHRFTVEEKMEKILFTLREKKEISFPELFEREKPEKAEIVATFLALLELSKQRILRAKQHKLFGEIRLFLVEGHWNGTEQQSKD</sequence>
<dbReference type="EMBL" id="AE016823">
    <property type="protein sequence ID" value="AAS71019.1"/>
    <property type="molecule type" value="Genomic_DNA"/>
</dbReference>
<dbReference type="RefSeq" id="WP_000426654.1">
    <property type="nucleotide sequence ID" value="NC_005823.1"/>
</dbReference>
<dbReference type="SMR" id="Q72PL7"/>
<dbReference type="KEGG" id="lic:LIC_12453"/>
<dbReference type="HOGENOM" id="CLU_038686_3_0_12"/>
<dbReference type="Proteomes" id="UP000007037">
    <property type="component" value="Chromosome I"/>
</dbReference>
<dbReference type="GO" id="GO:0005737">
    <property type="term" value="C:cytoplasm"/>
    <property type="evidence" value="ECO:0007669"/>
    <property type="project" value="UniProtKB-SubCell"/>
</dbReference>
<dbReference type="GO" id="GO:0051301">
    <property type="term" value="P:cell division"/>
    <property type="evidence" value="ECO:0007669"/>
    <property type="project" value="UniProtKB-KW"/>
</dbReference>
<dbReference type="GO" id="GO:0007059">
    <property type="term" value="P:chromosome segregation"/>
    <property type="evidence" value="ECO:0007669"/>
    <property type="project" value="UniProtKB-UniRule"/>
</dbReference>
<dbReference type="GO" id="GO:0006260">
    <property type="term" value="P:DNA replication"/>
    <property type="evidence" value="ECO:0007669"/>
    <property type="project" value="UniProtKB-UniRule"/>
</dbReference>
<dbReference type="Gene3D" id="6.10.250.2410">
    <property type="match status" value="1"/>
</dbReference>
<dbReference type="Gene3D" id="1.10.10.580">
    <property type="entry name" value="Structural maintenance of chromosome 1. Chain E"/>
    <property type="match status" value="1"/>
</dbReference>
<dbReference type="HAMAP" id="MF_01805">
    <property type="entry name" value="ScpA"/>
    <property type="match status" value="1"/>
</dbReference>
<dbReference type="InterPro" id="IPR003768">
    <property type="entry name" value="ScpA"/>
</dbReference>
<dbReference type="InterPro" id="IPR023093">
    <property type="entry name" value="ScpA-like_C"/>
</dbReference>
<dbReference type="PANTHER" id="PTHR33969">
    <property type="entry name" value="SEGREGATION AND CONDENSATION PROTEIN A"/>
    <property type="match status" value="1"/>
</dbReference>
<dbReference type="PANTHER" id="PTHR33969:SF2">
    <property type="entry name" value="SEGREGATION AND CONDENSATION PROTEIN A"/>
    <property type="match status" value="1"/>
</dbReference>
<dbReference type="Pfam" id="PF02616">
    <property type="entry name" value="SMC_ScpA"/>
    <property type="match status" value="1"/>
</dbReference>
<reference key="1">
    <citation type="journal article" date="2004" name="J. Bacteriol.">
        <title>Comparative genomics of two Leptospira interrogans serovars reveals novel insights into physiology and pathogenesis.</title>
        <authorList>
            <person name="Nascimento A.L.T.O."/>
            <person name="Ko A.I."/>
            <person name="Martins E.A.L."/>
            <person name="Monteiro-Vitorello C.B."/>
            <person name="Ho P.L."/>
            <person name="Haake D.A."/>
            <person name="Verjovski-Almeida S."/>
            <person name="Hartskeerl R.A."/>
            <person name="Marques M.V."/>
            <person name="Oliveira M.C."/>
            <person name="Menck C.F.M."/>
            <person name="Leite L.C.C."/>
            <person name="Carrer H."/>
            <person name="Coutinho L.L."/>
            <person name="Degrave W.M."/>
            <person name="Dellagostin O.A."/>
            <person name="El-Dorry H."/>
            <person name="Ferro E.S."/>
            <person name="Ferro M.I.T."/>
            <person name="Furlan L.R."/>
            <person name="Gamberini M."/>
            <person name="Giglioti E.A."/>
            <person name="Goes-Neto A."/>
            <person name="Goldman G.H."/>
            <person name="Goldman M.H.S."/>
            <person name="Harakava R."/>
            <person name="Jeronimo S.M.B."/>
            <person name="Junqueira-de-Azevedo I.L.M."/>
            <person name="Kimura E.T."/>
            <person name="Kuramae E.E."/>
            <person name="Lemos E.G.M."/>
            <person name="Lemos M.V.F."/>
            <person name="Marino C.L."/>
            <person name="Nunes L.R."/>
            <person name="de Oliveira R.C."/>
            <person name="Pereira G.G."/>
            <person name="Reis M.S."/>
            <person name="Schriefer A."/>
            <person name="Siqueira W.J."/>
            <person name="Sommer P."/>
            <person name="Tsai S.M."/>
            <person name="Simpson A.J.G."/>
            <person name="Ferro J.A."/>
            <person name="Camargo L.E.A."/>
            <person name="Kitajima J.P."/>
            <person name="Setubal J.C."/>
            <person name="Van Sluys M.A."/>
        </authorList>
    </citation>
    <scope>NUCLEOTIDE SEQUENCE [LARGE SCALE GENOMIC DNA]</scope>
    <source>
        <strain>Fiocruz L1-130</strain>
    </source>
</reference>
<gene>
    <name evidence="1" type="primary">scpA</name>
    <name type="ordered locus">LIC_12453</name>
</gene>
<organism>
    <name type="scientific">Leptospira interrogans serogroup Icterohaemorrhagiae serovar copenhageni (strain Fiocruz L1-130)</name>
    <dbReference type="NCBI Taxonomy" id="267671"/>
    <lineage>
        <taxon>Bacteria</taxon>
        <taxon>Pseudomonadati</taxon>
        <taxon>Spirochaetota</taxon>
        <taxon>Spirochaetia</taxon>
        <taxon>Leptospirales</taxon>
        <taxon>Leptospiraceae</taxon>
        <taxon>Leptospira</taxon>
    </lineage>
</organism>
<comment type="function">
    <text evidence="1">Participates in chromosomal partition during cell division. May act via the formation of a condensin-like complex containing Smc and ScpB that pull DNA away from mid-cell into both cell halves.</text>
</comment>
<comment type="subunit">
    <text evidence="1">Component of a cohesin-like complex composed of ScpA, ScpB and the Smc homodimer, in which ScpA and ScpB bind to the head domain of Smc. The presence of the three proteins is required for the association of the complex with DNA.</text>
</comment>
<comment type="subcellular location">
    <subcellularLocation>
        <location evidence="1">Cytoplasm</location>
    </subcellularLocation>
    <text evidence="1">Associated with two foci at the outer edges of the nucleoid region in young cells, and at four foci within both cell halves in older cells.</text>
</comment>
<comment type="similarity">
    <text evidence="1">Belongs to the ScpA family.</text>
</comment>
<proteinExistence type="inferred from homology"/>
<name>SCPA_LEPIC</name>
<protein>
    <recommendedName>
        <fullName evidence="1">Segregation and condensation protein A</fullName>
    </recommendedName>
</protein>
<accession>Q72PL7</accession>